<comment type="function">
    <text evidence="4">Catalyzes the synthesis of the inhibitory neurotransmitter gamma-aminobutyric acid (GABA) with pyridoxal 5'-phosphate as cofactor.</text>
</comment>
<comment type="catalytic activity">
    <reaction evidence="4">
        <text>L-glutamate + H(+) = 4-aminobutanoate + CO2</text>
        <dbReference type="Rhea" id="RHEA:17785"/>
        <dbReference type="ChEBI" id="CHEBI:15378"/>
        <dbReference type="ChEBI" id="CHEBI:16526"/>
        <dbReference type="ChEBI" id="CHEBI:29985"/>
        <dbReference type="ChEBI" id="CHEBI:59888"/>
        <dbReference type="EC" id="4.1.1.15"/>
    </reaction>
    <physiologicalReaction direction="left-to-right" evidence="6">
        <dbReference type="Rhea" id="RHEA:17786"/>
    </physiologicalReaction>
</comment>
<comment type="cofactor">
    <cofactor evidence="2">
        <name>pyridoxal 5'-phosphate</name>
        <dbReference type="ChEBI" id="CHEBI:597326"/>
    </cofactor>
</comment>
<comment type="subunit">
    <text evidence="2">Homodimer.</text>
</comment>
<comment type="tissue specificity">
    <text evidence="4">Expressed in brain and pancreatic islets.</text>
</comment>
<comment type="similarity">
    <text evidence="5">Belongs to the group II decarboxylase family.</text>
</comment>
<accession>P18088</accession>
<dbReference type="EC" id="4.1.1.15" evidence="4"/>
<dbReference type="EMBL" id="M34445">
    <property type="protein sequence ID" value="AAC42037.1"/>
    <property type="molecule type" value="mRNA"/>
</dbReference>
<dbReference type="EMBL" id="X57572">
    <property type="protein sequence ID" value="CAA40800.1"/>
    <property type="molecule type" value="mRNA"/>
</dbReference>
<dbReference type="EMBL" id="X57573">
    <property type="protein sequence ID" value="CAA40801.1"/>
    <property type="molecule type" value="mRNA"/>
</dbReference>
<dbReference type="EMBL" id="M76177">
    <property type="protein sequence ID" value="AAA41184.1"/>
    <property type="molecule type" value="mRNA"/>
</dbReference>
<dbReference type="PIR" id="A41367">
    <property type="entry name" value="A41367"/>
</dbReference>
<dbReference type="RefSeq" id="NP_058703.1">
    <property type="nucleotide sequence ID" value="NM_017007.2"/>
</dbReference>
<dbReference type="RefSeq" id="XP_017446943.1">
    <property type="nucleotide sequence ID" value="XM_017591454.3"/>
</dbReference>
<dbReference type="RefSeq" id="XP_017446944.1">
    <property type="nucleotide sequence ID" value="XM_017591455.1"/>
</dbReference>
<dbReference type="RefSeq" id="XP_063139145.1">
    <property type="nucleotide sequence ID" value="XM_063283075.1"/>
</dbReference>
<dbReference type="SMR" id="P18088"/>
<dbReference type="BioGRID" id="246550">
    <property type="interactions" value="2"/>
</dbReference>
<dbReference type="ComplexPortal" id="CPX-3063">
    <property type="entry name" value="Glutamate decarboxylase 1/2 complex"/>
</dbReference>
<dbReference type="ComplexPortal" id="CPX-3066">
    <property type="entry name" value="Glutamate decarboxylase 1 complex"/>
</dbReference>
<dbReference type="FunCoup" id="P18088">
    <property type="interactions" value="1897"/>
</dbReference>
<dbReference type="IntAct" id="P18088">
    <property type="interactions" value="2"/>
</dbReference>
<dbReference type="STRING" id="10116.ENSRNOP00000072778"/>
<dbReference type="ChEMBL" id="CHEMBL3758"/>
<dbReference type="iPTMnet" id="P18088"/>
<dbReference type="PhosphoSitePlus" id="P18088"/>
<dbReference type="PaxDb" id="10116-ENSRNOP00000000008"/>
<dbReference type="ABCD" id="P18088">
    <property type="antibodies" value="2 sequenced antibodies"/>
</dbReference>
<dbReference type="Ensembl" id="ENSRNOT00000000008.5">
    <property type="protein sequence ID" value="ENSRNOP00000000008.2"/>
    <property type="gene ID" value="ENSRNOG00000000007.8"/>
</dbReference>
<dbReference type="GeneID" id="24379"/>
<dbReference type="KEGG" id="rno:24379"/>
<dbReference type="UCSC" id="RGD:2652">
    <property type="organism name" value="rat"/>
</dbReference>
<dbReference type="AGR" id="RGD:2652"/>
<dbReference type="CTD" id="2571"/>
<dbReference type="RGD" id="2652">
    <property type="gene designation" value="Gad1"/>
</dbReference>
<dbReference type="eggNOG" id="KOG0629">
    <property type="taxonomic scope" value="Eukaryota"/>
</dbReference>
<dbReference type="GeneTree" id="ENSGT00940000155526"/>
<dbReference type="InParanoid" id="P18088"/>
<dbReference type="OrthoDB" id="8340at9989"/>
<dbReference type="PhylomeDB" id="P18088"/>
<dbReference type="TreeFam" id="TF314688"/>
<dbReference type="Reactome" id="R-RNO-888568">
    <property type="pathway name" value="GABA synthesis"/>
</dbReference>
<dbReference type="Reactome" id="R-RNO-888590">
    <property type="pathway name" value="GABA synthesis, release, reuptake and degradation"/>
</dbReference>
<dbReference type="SABIO-RK" id="P18088"/>
<dbReference type="PRO" id="PR:P18088"/>
<dbReference type="Proteomes" id="UP000002494">
    <property type="component" value="Chromosome 3"/>
</dbReference>
<dbReference type="Bgee" id="ENSRNOG00000000007">
    <property type="expression patterns" value="Expressed in cerebellum and 6 other cell types or tissues"/>
</dbReference>
<dbReference type="ExpressionAtlas" id="P18088">
    <property type="expression patterns" value="baseline and differential"/>
</dbReference>
<dbReference type="GO" id="GO:0030424">
    <property type="term" value="C:axon"/>
    <property type="evidence" value="ECO:0000266"/>
    <property type="project" value="RGD"/>
</dbReference>
<dbReference type="GO" id="GO:0043679">
    <property type="term" value="C:axon terminus"/>
    <property type="evidence" value="ECO:0000266"/>
    <property type="project" value="RGD"/>
</dbReference>
<dbReference type="GO" id="GO:0005938">
    <property type="term" value="C:cell cortex"/>
    <property type="evidence" value="ECO:0000266"/>
    <property type="project" value="RGD"/>
</dbReference>
<dbReference type="GO" id="GO:0005737">
    <property type="term" value="C:cytoplasm"/>
    <property type="evidence" value="ECO:0000266"/>
    <property type="project" value="RGD"/>
</dbReference>
<dbReference type="GO" id="GO:0098982">
    <property type="term" value="C:GABA-ergic synapse"/>
    <property type="evidence" value="ECO:0000266"/>
    <property type="project" value="RGD"/>
</dbReference>
<dbReference type="GO" id="GO:0060077">
    <property type="term" value="C:inhibitory synapse"/>
    <property type="evidence" value="ECO:0000266"/>
    <property type="project" value="RGD"/>
</dbReference>
<dbReference type="GO" id="GO:0044306">
    <property type="term" value="C:neuron projection terminus"/>
    <property type="evidence" value="ECO:0000266"/>
    <property type="project" value="RGD"/>
</dbReference>
<dbReference type="GO" id="GO:0043025">
    <property type="term" value="C:neuronal cell body"/>
    <property type="evidence" value="ECO:0000314"/>
    <property type="project" value="RGD"/>
</dbReference>
<dbReference type="GO" id="GO:0048471">
    <property type="term" value="C:perinuclear region of cytoplasm"/>
    <property type="evidence" value="ECO:0000266"/>
    <property type="project" value="RGD"/>
</dbReference>
<dbReference type="GO" id="GO:0098793">
    <property type="term" value="C:presynapse"/>
    <property type="evidence" value="ECO:0000266"/>
    <property type="project" value="RGD"/>
</dbReference>
<dbReference type="GO" id="GO:0048786">
    <property type="term" value="C:presynaptic active zone"/>
    <property type="evidence" value="ECO:0000314"/>
    <property type="project" value="MGI"/>
</dbReference>
<dbReference type="GO" id="GO:0045202">
    <property type="term" value="C:synapse"/>
    <property type="evidence" value="ECO:0000266"/>
    <property type="project" value="RGD"/>
</dbReference>
<dbReference type="GO" id="GO:0016595">
    <property type="term" value="F:glutamate binding"/>
    <property type="evidence" value="ECO:0000314"/>
    <property type="project" value="RGD"/>
</dbReference>
<dbReference type="GO" id="GO:0004351">
    <property type="term" value="F:glutamate decarboxylase activity"/>
    <property type="evidence" value="ECO:0000314"/>
    <property type="project" value="UniProtKB"/>
</dbReference>
<dbReference type="GO" id="GO:0042802">
    <property type="term" value="F:identical protein binding"/>
    <property type="evidence" value="ECO:0000250"/>
    <property type="project" value="UniProtKB"/>
</dbReference>
<dbReference type="GO" id="GO:0044877">
    <property type="term" value="F:protein-containing complex binding"/>
    <property type="evidence" value="ECO:0000314"/>
    <property type="project" value="RGD"/>
</dbReference>
<dbReference type="GO" id="GO:0030170">
    <property type="term" value="F:pyridoxal phosphate binding"/>
    <property type="evidence" value="ECO:0000314"/>
    <property type="project" value="RGD"/>
</dbReference>
<dbReference type="GO" id="GO:0071456">
    <property type="term" value="P:cellular response to hypoxia"/>
    <property type="evidence" value="ECO:0000270"/>
    <property type="project" value="RGD"/>
</dbReference>
<dbReference type="GO" id="GO:1904015">
    <property type="term" value="P:cellular response to serotonin"/>
    <property type="evidence" value="ECO:0000270"/>
    <property type="project" value="RGD"/>
</dbReference>
<dbReference type="GO" id="GO:0009449">
    <property type="term" value="P:gamma-aminobutyric acid biosynthetic process"/>
    <property type="evidence" value="ECO:0000314"/>
    <property type="project" value="UniProtKB"/>
</dbReference>
<dbReference type="GO" id="GO:0006538">
    <property type="term" value="P:glutamate catabolic process"/>
    <property type="evidence" value="ECO:0000266"/>
    <property type="project" value="RGD"/>
</dbReference>
<dbReference type="GO" id="GO:0035641">
    <property type="term" value="P:locomotory exploration behavior"/>
    <property type="evidence" value="ECO:0000266"/>
    <property type="project" value="RGD"/>
</dbReference>
<dbReference type="GO" id="GO:0090326">
    <property type="term" value="P:positive regulation of locomotion involved in locomotory behavior"/>
    <property type="evidence" value="ECO:0000315"/>
    <property type="project" value="RGD"/>
</dbReference>
<dbReference type="GO" id="GO:0010996">
    <property type="term" value="P:response to auditory stimulus"/>
    <property type="evidence" value="ECO:0000270"/>
    <property type="project" value="RGD"/>
</dbReference>
<dbReference type="GO" id="GO:0061771">
    <property type="term" value="P:response to caloric restriction"/>
    <property type="evidence" value="ECO:0000270"/>
    <property type="project" value="RGD"/>
</dbReference>
<dbReference type="GO" id="GO:0042220">
    <property type="term" value="P:response to cocaine"/>
    <property type="evidence" value="ECO:0000270"/>
    <property type="project" value="RGD"/>
</dbReference>
<dbReference type="GO" id="GO:0045471">
    <property type="term" value="P:response to ethanol"/>
    <property type="evidence" value="ECO:0000270"/>
    <property type="project" value="RGD"/>
</dbReference>
<dbReference type="GO" id="GO:0035900">
    <property type="term" value="P:response to isolation stress"/>
    <property type="evidence" value="ECO:0000270"/>
    <property type="project" value="RGD"/>
</dbReference>
<dbReference type="GO" id="GO:1904313">
    <property type="term" value="P:response to methamphetamine hydrochloride"/>
    <property type="evidence" value="ECO:0000270"/>
    <property type="project" value="RGD"/>
</dbReference>
<dbReference type="GO" id="GO:0043278">
    <property type="term" value="P:response to morphine"/>
    <property type="evidence" value="ECO:0000270"/>
    <property type="project" value="RGD"/>
</dbReference>
<dbReference type="GO" id="GO:0032570">
    <property type="term" value="P:response to progesterone"/>
    <property type="evidence" value="ECO:0000270"/>
    <property type="project" value="RGD"/>
</dbReference>
<dbReference type="GO" id="GO:0009636">
    <property type="term" value="P:response to toxic substance"/>
    <property type="evidence" value="ECO:0000270"/>
    <property type="project" value="RGD"/>
</dbReference>
<dbReference type="GO" id="GO:0009410">
    <property type="term" value="P:response to xenobiotic stimulus"/>
    <property type="evidence" value="ECO:0000270"/>
    <property type="project" value="RGD"/>
</dbReference>
<dbReference type="GO" id="GO:0035176">
    <property type="term" value="P:social behavior"/>
    <property type="evidence" value="ECO:0000315"/>
    <property type="project" value="RGD"/>
</dbReference>
<dbReference type="CDD" id="cd06450">
    <property type="entry name" value="DOPA_deC_like"/>
    <property type="match status" value="1"/>
</dbReference>
<dbReference type="FunFam" id="3.90.1150.170:FF:000003">
    <property type="entry name" value="Glutamate decarboxylase 1"/>
    <property type="match status" value="1"/>
</dbReference>
<dbReference type="FunFam" id="3.40.640.10:FF:000016">
    <property type="entry name" value="Glutamate decarboxylase like 1"/>
    <property type="match status" value="1"/>
</dbReference>
<dbReference type="Gene3D" id="3.90.1150.170">
    <property type="match status" value="1"/>
</dbReference>
<dbReference type="Gene3D" id="3.40.640.10">
    <property type="entry name" value="Type I PLP-dependent aspartate aminotransferase-like (Major domain)"/>
    <property type="match status" value="1"/>
</dbReference>
<dbReference type="InterPro" id="IPR002129">
    <property type="entry name" value="PyrdxlP-dep_de-COase"/>
</dbReference>
<dbReference type="InterPro" id="IPR015424">
    <property type="entry name" value="PyrdxlP-dep_Trfase"/>
</dbReference>
<dbReference type="InterPro" id="IPR015421">
    <property type="entry name" value="PyrdxlP-dep_Trfase_major"/>
</dbReference>
<dbReference type="InterPro" id="IPR021115">
    <property type="entry name" value="Pyridoxal-P_BS"/>
</dbReference>
<dbReference type="PANTHER" id="PTHR45677:SF5">
    <property type="entry name" value="GLUTAMATE DECARBOXYLASE 1"/>
    <property type="match status" value="1"/>
</dbReference>
<dbReference type="PANTHER" id="PTHR45677">
    <property type="entry name" value="GLUTAMATE DECARBOXYLASE-RELATED"/>
    <property type="match status" value="1"/>
</dbReference>
<dbReference type="Pfam" id="PF00282">
    <property type="entry name" value="Pyridoxal_deC"/>
    <property type="match status" value="1"/>
</dbReference>
<dbReference type="SUPFAM" id="SSF53383">
    <property type="entry name" value="PLP-dependent transferases"/>
    <property type="match status" value="1"/>
</dbReference>
<dbReference type="PROSITE" id="PS00392">
    <property type="entry name" value="DDC_GAD_HDC_YDC"/>
    <property type="match status" value="1"/>
</dbReference>
<proteinExistence type="evidence at protein level"/>
<organism>
    <name type="scientific">Rattus norvegicus</name>
    <name type="common">Rat</name>
    <dbReference type="NCBI Taxonomy" id="10116"/>
    <lineage>
        <taxon>Eukaryota</taxon>
        <taxon>Metazoa</taxon>
        <taxon>Chordata</taxon>
        <taxon>Craniata</taxon>
        <taxon>Vertebrata</taxon>
        <taxon>Euteleostomi</taxon>
        <taxon>Mammalia</taxon>
        <taxon>Eutheria</taxon>
        <taxon>Euarchontoglires</taxon>
        <taxon>Glires</taxon>
        <taxon>Rodentia</taxon>
        <taxon>Myomorpha</taxon>
        <taxon>Muroidea</taxon>
        <taxon>Muridae</taxon>
        <taxon>Murinae</taxon>
        <taxon>Rattus</taxon>
    </lineage>
</organism>
<feature type="chain" id="PRO_0000146967" description="Glutamate decarboxylase 1">
    <location>
        <begin position="1"/>
        <end position="593"/>
    </location>
</feature>
<feature type="region of interest" description="Disordered" evidence="3">
    <location>
        <begin position="1"/>
        <end position="22"/>
    </location>
</feature>
<feature type="compositionally biased region" description="Low complexity" evidence="3">
    <location>
        <begin position="1"/>
        <end position="12"/>
    </location>
</feature>
<feature type="binding site" evidence="2">
    <location>
        <begin position="189"/>
        <end position="191"/>
    </location>
    <ligand>
        <name>4-aminobutanoate</name>
        <dbReference type="ChEBI" id="CHEBI:59888"/>
    </ligand>
</feature>
<feature type="binding site" evidence="2">
    <location>
        <position position="566"/>
    </location>
    <ligand>
        <name>4-aminobutanoate</name>
        <dbReference type="ChEBI" id="CHEBI:59888"/>
    </ligand>
</feature>
<feature type="modified residue" description="Phosphoserine" evidence="1">
    <location>
        <position position="77"/>
    </location>
</feature>
<feature type="modified residue" description="N6-(pyridoxal phosphate)lysine" evidence="2">
    <location>
        <position position="404"/>
    </location>
</feature>
<feature type="sequence conflict" description="In Ref. 2; CAA40800." evidence="5" ref="2">
    <original>L</original>
    <variation>V</variation>
    <location>
        <position position="103"/>
    </location>
</feature>
<feature type="sequence conflict" description="In Ref. 2; CAA40800." evidence="5" ref="2">
    <original>F</original>
    <variation>S</variation>
    <location>
        <position position="284"/>
    </location>
</feature>
<feature type="sequence conflict" description="In Ref. 2; CAA40800." evidence="5" ref="2">
    <original>EH</original>
    <variation>AD</variation>
    <location>
        <begin position="287"/>
        <end position="288"/>
    </location>
</feature>
<feature type="sequence conflict" description="In Ref. 2; CAA40800." evidence="5" ref="2">
    <original>AG</original>
    <variation>EA</variation>
    <location>
        <begin position="344"/>
        <end position="345"/>
    </location>
</feature>
<feature type="sequence conflict" description="In Ref. 2; CAA40800." evidence="5" ref="2">
    <original>T</original>
    <variation>I</variation>
    <location>
        <position position="347"/>
    </location>
</feature>
<feature type="sequence conflict" description="In Ref. 2; CAA40800." evidence="5" ref="2">
    <original>FD</original>
    <variation>LE</variation>
    <location>
        <begin position="352"/>
        <end position="353"/>
    </location>
</feature>
<feature type="sequence conflict" description="In Ref. 2; CAA40800." evidence="5" ref="2">
    <original>L</original>
    <variation>R</variation>
    <location>
        <position position="380"/>
    </location>
</feature>
<protein>
    <recommendedName>
        <fullName>Glutamate decarboxylase 1</fullName>
        <ecNumber evidence="4">4.1.1.15</ecNumber>
    </recommendedName>
    <alternativeName>
        <fullName>67 kDa glutamic acid decarboxylase</fullName>
        <shortName>GAD-67</shortName>
    </alternativeName>
    <alternativeName>
        <fullName>Glutamate decarboxylase 67 kDa isoform</fullName>
    </alternativeName>
</protein>
<name>DCE1_RAT</name>
<evidence type="ECO:0000250" key="1">
    <source>
        <dbReference type="UniProtKB" id="P48318"/>
    </source>
</evidence>
<evidence type="ECO:0000250" key="2">
    <source>
        <dbReference type="UniProtKB" id="Q99259"/>
    </source>
</evidence>
<evidence type="ECO:0000256" key="3">
    <source>
        <dbReference type="SAM" id="MobiDB-lite"/>
    </source>
</evidence>
<evidence type="ECO:0000269" key="4">
    <source>
    </source>
</evidence>
<evidence type="ECO:0000305" key="5"/>
<evidence type="ECO:0000305" key="6">
    <source>
    </source>
</evidence>
<gene>
    <name type="primary">Gad1</name>
    <name type="synonym">Gad67</name>
</gene>
<sequence>MASSTPSPATSSNAGADPNTTNLRPTTYDTWCGVAHGCTRKLGLKICGFLQRTNSLEEKSRLVSAFRERQASKNLLSCENSDPGARFRRTETDFSNLFAQDLLPAKNGEEQTVQFLLEVVDILLNYVRKTFDRSTKVLDFHHPHQLLEGMEGFNLELSDHPESLEQILVDCRDTLKYGVRTGHPRFFNQLSTGLDIIGLAGEWLTSTANTNMFTYEIAPVFVLMEQITLKKMREIIGWSNKDGDGIFSPGGAISNMYSIMAARYKYFPEVKTKGMAAVPKLVLFTSEHSHYSIKKAGAALGFGTDNVILIKCNERGKIIPADLEAKILDAKQKGFVPLYVNATAGTTVYGAFDPIQEIADICEKYNLWLHVDAAWGGGLLMSRKHRHKLSGIERANSVTWNPHKMMGVLLQCSAILVKEKGILQGCNQMCAGYLFQPDKQYDVSYDTGDKAIQCGRHVDIFKFWLMWKAKGTVGFENQINKCLELAEYLYAKIKNREEFEMVFNGEPEHTNVCFWYIPQSLRGVPDSPERREKLHRVAPKIKALMMESGTTMVGYQPQGDKANFFRMVISNPAATQSDIDFLIEEIERLGQDL</sequence>
<keyword id="KW-0210">Decarboxylase</keyword>
<keyword id="KW-0456">Lyase</keyword>
<keyword id="KW-0530">Neurotransmitter biosynthesis</keyword>
<keyword id="KW-0597">Phosphoprotein</keyword>
<keyword id="KW-0663">Pyridoxal phosphate</keyword>
<keyword id="KW-1185">Reference proteome</keyword>
<reference key="1">
    <citation type="journal article" date="1990" name="Brain Res. Mol. Brain Res.">
        <title>Characterization of a cDNA coding for rat glutamic acid decarboxylase.</title>
        <authorList>
            <person name="Wyborski R.J."/>
            <person name="Bond R.W."/>
            <person name="Gottlieb D.I."/>
        </authorList>
    </citation>
    <scope>NUCLEOTIDE SEQUENCE [MRNA]</scope>
</reference>
<reference key="2">
    <citation type="journal article" date="1990" name="J. Neurochem.">
        <title>Rat brain glutamic acid decarboxylase sequence deduced from a cloned cDNA.</title>
        <authorList>
            <person name="Julien J.F."/>
            <person name="Samama P."/>
            <person name="Mallet J."/>
        </authorList>
    </citation>
    <scope>NUCLEOTIDE SEQUENCE [MRNA]</scope>
</reference>
<reference key="3">
    <citation type="journal article" date="1991" name="Proc. Natl. Acad. Sci. U.S.A.">
        <title>Cloning, characterization, and autoimmune recognition of rat islet glutamic acid decarboxylase in insulin-dependent diabetes mellitus.</title>
        <authorList>
            <person name="Michelsen B.K."/>
            <person name="Petersen J.S."/>
            <person name="Boel E."/>
            <person name="Moldrup A."/>
            <person name="Dyrberg T."/>
            <person name="Madsen O.D."/>
        </authorList>
    </citation>
    <scope>NUCLEOTIDE SEQUENCE [MRNA]</scope>
    <scope>TISSUE SPECIFICITY</scope>
    <scope>CATALYTIC ACTIVITY</scope>
    <scope>FUNCTION</scope>
</reference>